<keyword id="KW-0240">DNA-directed RNA polymerase</keyword>
<keyword id="KW-0548">Nucleotidyltransferase</keyword>
<keyword id="KW-0804">Transcription</keyword>
<keyword id="KW-0808">Transferase</keyword>
<feature type="chain" id="PRO_1000121240" description="DNA-directed RNA polymerase subunit omega">
    <location>
        <begin position="1"/>
        <end position="72"/>
    </location>
</feature>
<protein>
    <recommendedName>
        <fullName evidence="1">DNA-directed RNA polymerase subunit omega</fullName>
        <shortName evidence="1">RNAP omega subunit</shortName>
        <ecNumber evidence="1">2.7.7.6</ecNumber>
    </recommendedName>
    <alternativeName>
        <fullName evidence="1">RNA polymerase omega subunit</fullName>
    </alternativeName>
    <alternativeName>
        <fullName evidence="1">Transcriptase subunit omega</fullName>
    </alternativeName>
</protein>
<proteinExistence type="inferred from homology"/>
<evidence type="ECO:0000255" key="1">
    <source>
        <dbReference type="HAMAP-Rule" id="MF_00366"/>
    </source>
</evidence>
<comment type="function">
    <text evidence="1">Promotes RNA polymerase assembly. Latches the N- and C-terminal regions of the beta' subunit thereby facilitating its interaction with the beta and alpha subunits.</text>
</comment>
<comment type="catalytic activity">
    <reaction evidence="1">
        <text>RNA(n) + a ribonucleoside 5'-triphosphate = RNA(n+1) + diphosphate</text>
        <dbReference type="Rhea" id="RHEA:21248"/>
        <dbReference type="Rhea" id="RHEA-COMP:14527"/>
        <dbReference type="Rhea" id="RHEA-COMP:17342"/>
        <dbReference type="ChEBI" id="CHEBI:33019"/>
        <dbReference type="ChEBI" id="CHEBI:61557"/>
        <dbReference type="ChEBI" id="CHEBI:140395"/>
        <dbReference type="EC" id="2.7.7.6"/>
    </reaction>
</comment>
<comment type="subunit">
    <text evidence="1">The RNAP catalytic core consists of 2 alpha, 1 beta, 1 beta' and 1 omega subunit. When a sigma factor is associated with the core the holoenzyme is formed, which can initiate transcription.</text>
</comment>
<comment type="similarity">
    <text evidence="1">Belongs to the RNA polymerase subunit omega family.</text>
</comment>
<accession>B2G842</accession>
<dbReference type="EC" id="2.7.7.6" evidence="1"/>
<dbReference type="EMBL" id="AP007281">
    <property type="protein sequence ID" value="BAG25624.1"/>
    <property type="molecule type" value="Genomic_DNA"/>
</dbReference>
<dbReference type="RefSeq" id="WP_003663855.1">
    <property type="nucleotide sequence ID" value="NC_010609.1"/>
</dbReference>
<dbReference type="SMR" id="B2G842"/>
<dbReference type="GeneID" id="77191844"/>
<dbReference type="KEGG" id="lrf:LAR_1108"/>
<dbReference type="HOGENOM" id="CLU_125406_6_0_9"/>
<dbReference type="GO" id="GO:0000428">
    <property type="term" value="C:DNA-directed RNA polymerase complex"/>
    <property type="evidence" value="ECO:0007669"/>
    <property type="project" value="UniProtKB-KW"/>
</dbReference>
<dbReference type="GO" id="GO:0003677">
    <property type="term" value="F:DNA binding"/>
    <property type="evidence" value="ECO:0007669"/>
    <property type="project" value="UniProtKB-UniRule"/>
</dbReference>
<dbReference type="GO" id="GO:0003899">
    <property type="term" value="F:DNA-directed RNA polymerase activity"/>
    <property type="evidence" value="ECO:0007669"/>
    <property type="project" value="UniProtKB-UniRule"/>
</dbReference>
<dbReference type="GO" id="GO:0006351">
    <property type="term" value="P:DNA-templated transcription"/>
    <property type="evidence" value="ECO:0007669"/>
    <property type="project" value="UniProtKB-UniRule"/>
</dbReference>
<dbReference type="Gene3D" id="3.90.940.10">
    <property type="match status" value="1"/>
</dbReference>
<dbReference type="HAMAP" id="MF_00366">
    <property type="entry name" value="RNApol_bact_RpoZ"/>
    <property type="match status" value="1"/>
</dbReference>
<dbReference type="InterPro" id="IPR003716">
    <property type="entry name" value="DNA-dir_RNA_pol_omega"/>
</dbReference>
<dbReference type="InterPro" id="IPR006110">
    <property type="entry name" value="Pol_omega/Rpo6/RPB6"/>
</dbReference>
<dbReference type="InterPro" id="IPR036161">
    <property type="entry name" value="RPB6/omega-like_sf"/>
</dbReference>
<dbReference type="NCBIfam" id="TIGR00690">
    <property type="entry name" value="rpoZ"/>
    <property type="match status" value="1"/>
</dbReference>
<dbReference type="PANTHER" id="PTHR34476">
    <property type="entry name" value="DNA-DIRECTED RNA POLYMERASE SUBUNIT OMEGA"/>
    <property type="match status" value="1"/>
</dbReference>
<dbReference type="PANTHER" id="PTHR34476:SF1">
    <property type="entry name" value="DNA-DIRECTED RNA POLYMERASE SUBUNIT OMEGA"/>
    <property type="match status" value="1"/>
</dbReference>
<dbReference type="Pfam" id="PF01192">
    <property type="entry name" value="RNA_pol_Rpb6"/>
    <property type="match status" value="1"/>
</dbReference>
<dbReference type="SMART" id="SM01409">
    <property type="entry name" value="RNA_pol_Rpb6"/>
    <property type="match status" value="1"/>
</dbReference>
<dbReference type="SUPFAM" id="SSF63562">
    <property type="entry name" value="RPB6/omega subunit-like"/>
    <property type="match status" value="1"/>
</dbReference>
<reference key="1">
    <citation type="journal article" date="2008" name="DNA Res.">
        <title>Comparative genome analysis of Lactobacillus reuteri and Lactobacillus fermentum reveal a genomic island for reuterin and cobalamin production.</title>
        <authorList>
            <person name="Morita H."/>
            <person name="Toh H."/>
            <person name="Fukuda S."/>
            <person name="Horikawa H."/>
            <person name="Oshima K."/>
            <person name="Suzuki T."/>
            <person name="Murakami M."/>
            <person name="Hisamatsu S."/>
            <person name="Kato Y."/>
            <person name="Takizawa T."/>
            <person name="Fukuoka H."/>
            <person name="Yoshimura T."/>
            <person name="Itoh K."/>
            <person name="O'Sullivan D.J."/>
            <person name="McKay L.L."/>
            <person name="Ohno H."/>
            <person name="Kikuchi J."/>
            <person name="Masaoka T."/>
            <person name="Hattori M."/>
        </authorList>
    </citation>
    <scope>NUCLEOTIDE SEQUENCE [LARGE SCALE GENOMIC DNA]</scope>
    <source>
        <strain>JCM 1112</strain>
    </source>
</reference>
<sequence>MILFPSVDELLKHIDSRYSLVMLASKRANELDAGAAPLLEHYDSSKSVGKALEEILAGKVTIDPDHTEDLQD</sequence>
<organism>
    <name type="scientific">Limosilactobacillus reuteri subsp. reuteri (strain JCM 1112)</name>
    <name type="common">Lactobacillus reuteri</name>
    <dbReference type="NCBI Taxonomy" id="557433"/>
    <lineage>
        <taxon>Bacteria</taxon>
        <taxon>Bacillati</taxon>
        <taxon>Bacillota</taxon>
        <taxon>Bacilli</taxon>
        <taxon>Lactobacillales</taxon>
        <taxon>Lactobacillaceae</taxon>
        <taxon>Limosilactobacillus</taxon>
    </lineage>
</organism>
<gene>
    <name evidence="1" type="primary">rpoZ</name>
    <name type="ordered locus">LAR_1108</name>
</gene>
<name>RPOZ_LIMRJ</name>